<protein>
    <recommendedName>
        <fullName evidence="1">Inner membrane lipoprotein DcrB</fullName>
    </recommendedName>
</protein>
<keyword id="KW-1003">Cell membrane</keyword>
<keyword id="KW-0449">Lipoprotein</keyword>
<keyword id="KW-0472">Membrane</keyword>
<keyword id="KW-0564">Palmitate</keyword>
<keyword id="KW-1185">Reference proteome</keyword>
<keyword id="KW-0732">Signal</keyword>
<comment type="function">
    <text evidence="1">Plays a role in cell envelope biogenesis, maintenance of cell envelope integrity and membrane homeostasis. Essential for lipoprotein maturation under conditions where membrane fluidity may be altered.</text>
</comment>
<comment type="subcellular location">
    <subcellularLocation>
        <location evidence="1">Cell membrane</location>
        <topology evidence="1">Lipid-anchor</topology>
        <orientation evidence="1">Periplasmic side</orientation>
    </subcellularLocation>
</comment>
<comment type="similarity">
    <text evidence="1">Belongs to the DcrB family.</text>
</comment>
<comment type="sequence caution" evidence="2">
    <conflict type="erroneous initiation">
        <sequence resource="EMBL-CDS" id="AAN44949"/>
    </conflict>
</comment>
<comment type="sequence caution" evidence="2">
    <conflict type="erroneous initiation">
        <sequence resource="EMBL-CDS" id="AAP19233"/>
    </conflict>
</comment>
<sequence>MRNLVKYVGIGLLVMGLAACDDKDTNATAQGSVAESNATGNPVNLLDGKLSFSLPADMTDQSGKLGTQANNMHVWSDATGQKAVIVIMGDDPKEDLAVLAKRLEDQQRSRDPQLQVVTNKAIELKGHKMQQLDSIISAKGQTAYSSVILGNVGNQLLTMQITLPADDQQKAQTTAENIINTLVIQ</sequence>
<reference key="1">
    <citation type="journal article" date="2002" name="Nucleic Acids Res.">
        <title>Genome sequence of Shigella flexneri 2a: insights into pathogenicity through comparison with genomes of Escherichia coli K12 and O157.</title>
        <authorList>
            <person name="Jin Q."/>
            <person name="Yuan Z."/>
            <person name="Xu J."/>
            <person name="Wang Y."/>
            <person name="Shen Y."/>
            <person name="Lu W."/>
            <person name="Wang J."/>
            <person name="Liu H."/>
            <person name="Yang J."/>
            <person name="Yang F."/>
            <person name="Zhang X."/>
            <person name="Zhang J."/>
            <person name="Yang G."/>
            <person name="Wu H."/>
            <person name="Qu D."/>
            <person name="Dong J."/>
            <person name="Sun L."/>
            <person name="Xue Y."/>
            <person name="Zhao A."/>
            <person name="Gao Y."/>
            <person name="Zhu J."/>
            <person name="Kan B."/>
            <person name="Ding K."/>
            <person name="Chen S."/>
            <person name="Cheng H."/>
            <person name="Yao Z."/>
            <person name="He B."/>
            <person name="Chen R."/>
            <person name="Ma D."/>
            <person name="Qiang B."/>
            <person name="Wen Y."/>
            <person name="Hou Y."/>
            <person name="Yu J."/>
        </authorList>
    </citation>
    <scope>NUCLEOTIDE SEQUENCE [LARGE SCALE GENOMIC DNA]</scope>
    <source>
        <strain>301 / Serotype 2a</strain>
    </source>
</reference>
<reference key="2">
    <citation type="journal article" date="2003" name="Infect. Immun.">
        <title>Complete genome sequence and comparative genomics of Shigella flexneri serotype 2a strain 2457T.</title>
        <authorList>
            <person name="Wei J."/>
            <person name="Goldberg M.B."/>
            <person name="Burland V."/>
            <person name="Venkatesan M.M."/>
            <person name="Deng W."/>
            <person name="Fournier G."/>
            <person name="Mayhew G.F."/>
            <person name="Plunkett G. III"/>
            <person name="Rose D.J."/>
            <person name="Darling A."/>
            <person name="Mau B."/>
            <person name="Perna N.T."/>
            <person name="Payne S.M."/>
            <person name="Runyen-Janecky L.J."/>
            <person name="Zhou S."/>
            <person name="Schwartz D.C."/>
            <person name="Blattner F.R."/>
        </authorList>
    </citation>
    <scope>NUCLEOTIDE SEQUENCE [LARGE SCALE GENOMIC DNA]</scope>
    <source>
        <strain>ATCC 700930 / 2457T / Serotype 2a</strain>
    </source>
</reference>
<accession>P0AEE2</accession>
<accession>P37620</accession>
<accession>P76699</accession>
<gene>
    <name evidence="1" type="primary">dcrB</name>
    <name type="ordered locus">SF3490</name>
    <name type="ordered locus">S4273</name>
</gene>
<name>DCRB_SHIFL</name>
<proteinExistence type="inferred from homology"/>
<organism>
    <name type="scientific">Shigella flexneri</name>
    <dbReference type="NCBI Taxonomy" id="623"/>
    <lineage>
        <taxon>Bacteria</taxon>
        <taxon>Pseudomonadati</taxon>
        <taxon>Pseudomonadota</taxon>
        <taxon>Gammaproteobacteria</taxon>
        <taxon>Enterobacterales</taxon>
        <taxon>Enterobacteriaceae</taxon>
        <taxon>Shigella</taxon>
    </lineage>
</organism>
<dbReference type="EMBL" id="AE005674">
    <property type="protein sequence ID" value="AAN44949.1"/>
    <property type="status" value="ALT_INIT"/>
    <property type="molecule type" value="Genomic_DNA"/>
</dbReference>
<dbReference type="EMBL" id="AE014073">
    <property type="protein sequence ID" value="AAP19233.1"/>
    <property type="status" value="ALT_INIT"/>
    <property type="molecule type" value="Genomic_DNA"/>
</dbReference>
<dbReference type="RefSeq" id="NP_709242.3">
    <property type="nucleotide sequence ID" value="NC_004337.2"/>
</dbReference>
<dbReference type="RefSeq" id="WP_001245295.1">
    <property type="nucleotide sequence ID" value="NZ_WPGW01000010.1"/>
</dbReference>
<dbReference type="SMR" id="P0AEE2"/>
<dbReference type="STRING" id="198214.SF3490"/>
<dbReference type="PaxDb" id="198214-SF3490"/>
<dbReference type="GeneID" id="1026456"/>
<dbReference type="GeneID" id="93778519"/>
<dbReference type="KEGG" id="sfl:SF3490"/>
<dbReference type="KEGG" id="sfx:S4273"/>
<dbReference type="PATRIC" id="fig|198214.7.peg.4111"/>
<dbReference type="HOGENOM" id="CLU_125378_0_0_6"/>
<dbReference type="Proteomes" id="UP000001006">
    <property type="component" value="Chromosome"/>
</dbReference>
<dbReference type="Proteomes" id="UP000002673">
    <property type="component" value="Chromosome"/>
</dbReference>
<dbReference type="GO" id="GO:0005886">
    <property type="term" value="C:plasma membrane"/>
    <property type="evidence" value="ECO:0007669"/>
    <property type="project" value="UniProtKB-SubCell"/>
</dbReference>
<dbReference type="Gene3D" id="3.40.1000.10">
    <property type="entry name" value="Mog1/PsbP, alpha/beta/alpha sandwich"/>
    <property type="match status" value="1"/>
</dbReference>
<dbReference type="HAMAP" id="MF_02248">
    <property type="entry name" value="DcrB"/>
    <property type="match status" value="1"/>
</dbReference>
<dbReference type="InterPro" id="IPR046406">
    <property type="entry name" value="DcrB"/>
</dbReference>
<dbReference type="InterPro" id="IPR014894">
    <property type="entry name" value="DcrB/EagT6"/>
</dbReference>
<dbReference type="NCBIfam" id="NF008627">
    <property type="entry name" value="PRK11615.1"/>
    <property type="match status" value="1"/>
</dbReference>
<dbReference type="Pfam" id="PF08786">
    <property type="entry name" value="DcrB"/>
    <property type="match status" value="1"/>
</dbReference>
<dbReference type="PROSITE" id="PS51257">
    <property type="entry name" value="PROKAR_LIPOPROTEIN"/>
    <property type="match status" value="1"/>
</dbReference>
<feature type="signal peptide" evidence="1">
    <location>
        <begin position="1"/>
        <end position="19"/>
    </location>
</feature>
<feature type="chain" id="PRO_0000043343" description="Inner membrane lipoprotein DcrB" evidence="1">
    <location>
        <begin position="20"/>
        <end position="185"/>
    </location>
</feature>
<feature type="lipid moiety-binding region" description="N-palmitoyl cysteine" evidence="1">
    <location>
        <position position="20"/>
    </location>
</feature>
<feature type="lipid moiety-binding region" description="S-diacylglycerol cysteine" evidence="1">
    <location>
        <position position="20"/>
    </location>
</feature>
<evidence type="ECO:0000255" key="1">
    <source>
        <dbReference type="HAMAP-Rule" id="MF_02248"/>
    </source>
</evidence>
<evidence type="ECO:0000305" key="2"/>